<sequence length="299" mass="31637">MPQPYPFGRVITAMITPFNAEGQVAYDIAQSLAVHLVEQGSDGLVICGTTGESPTLTWEEELQLFRAVKEAVGDRAAVIAGTGSNCTREAIAATQSAATLGLNGSLQVVPYYNKPPQEGLYAHFRAIAEACPDLPLMLYNIPGRTGQSLQPETVARLASLPNVVAIKAASGNVEEVSALRQLLPDSFAIYSGDDSLTLPMLAVGAQGVVSVASHLVGPQLQALIQAFEAGNVARAQQLHHQLYPLFKALFLTTNPIPVRAAMELLGWSIGLPRLPLVPASAEIRQALASCLTELGLYTA</sequence>
<organism>
    <name type="scientific">Synechococcus elongatus (strain ATCC 33912 / PCC 7942 / FACHB-805)</name>
    <name type="common">Anacystis nidulans R2</name>
    <dbReference type="NCBI Taxonomy" id="1140"/>
    <lineage>
        <taxon>Bacteria</taxon>
        <taxon>Bacillati</taxon>
        <taxon>Cyanobacteriota</taxon>
        <taxon>Cyanophyceae</taxon>
        <taxon>Synechococcales</taxon>
        <taxon>Synechococcaceae</taxon>
        <taxon>Synechococcus</taxon>
    </lineage>
</organism>
<dbReference type="EC" id="4.3.3.7" evidence="1"/>
<dbReference type="EMBL" id="CP000100">
    <property type="protein sequence ID" value="ABB57877.1"/>
    <property type="molecule type" value="Genomic_DNA"/>
</dbReference>
<dbReference type="RefSeq" id="WP_011244557.1">
    <property type="nucleotide sequence ID" value="NZ_JACJTX010000001.1"/>
</dbReference>
<dbReference type="SMR" id="Q31M42"/>
<dbReference type="STRING" id="1140.Synpcc7942_1847"/>
<dbReference type="PaxDb" id="1140-Synpcc7942_1847"/>
<dbReference type="GeneID" id="72430718"/>
<dbReference type="KEGG" id="syf:Synpcc7942_1847"/>
<dbReference type="eggNOG" id="COG0329">
    <property type="taxonomic scope" value="Bacteria"/>
</dbReference>
<dbReference type="HOGENOM" id="CLU_049343_7_1_3"/>
<dbReference type="OrthoDB" id="9782828at2"/>
<dbReference type="BioCyc" id="SYNEL:SYNPCC7942_1847-MONOMER"/>
<dbReference type="UniPathway" id="UPA00034">
    <property type="reaction ID" value="UER00017"/>
</dbReference>
<dbReference type="Proteomes" id="UP000889800">
    <property type="component" value="Chromosome"/>
</dbReference>
<dbReference type="GO" id="GO:0005829">
    <property type="term" value="C:cytosol"/>
    <property type="evidence" value="ECO:0007669"/>
    <property type="project" value="TreeGrafter"/>
</dbReference>
<dbReference type="GO" id="GO:0008840">
    <property type="term" value="F:4-hydroxy-tetrahydrodipicolinate synthase activity"/>
    <property type="evidence" value="ECO:0007669"/>
    <property type="project" value="UniProtKB-UniRule"/>
</dbReference>
<dbReference type="GO" id="GO:0019877">
    <property type="term" value="P:diaminopimelate biosynthetic process"/>
    <property type="evidence" value="ECO:0007669"/>
    <property type="project" value="UniProtKB-UniRule"/>
</dbReference>
<dbReference type="GO" id="GO:0009089">
    <property type="term" value="P:lysine biosynthetic process via diaminopimelate"/>
    <property type="evidence" value="ECO:0007669"/>
    <property type="project" value="UniProtKB-UniRule"/>
</dbReference>
<dbReference type="CDD" id="cd00950">
    <property type="entry name" value="DHDPS"/>
    <property type="match status" value="1"/>
</dbReference>
<dbReference type="Gene3D" id="3.20.20.70">
    <property type="entry name" value="Aldolase class I"/>
    <property type="match status" value="1"/>
</dbReference>
<dbReference type="HAMAP" id="MF_00418">
    <property type="entry name" value="DapA"/>
    <property type="match status" value="1"/>
</dbReference>
<dbReference type="InterPro" id="IPR013785">
    <property type="entry name" value="Aldolase_TIM"/>
</dbReference>
<dbReference type="InterPro" id="IPR005263">
    <property type="entry name" value="DapA"/>
</dbReference>
<dbReference type="InterPro" id="IPR002220">
    <property type="entry name" value="DapA-like"/>
</dbReference>
<dbReference type="InterPro" id="IPR020625">
    <property type="entry name" value="Schiff_base-form_aldolases_AS"/>
</dbReference>
<dbReference type="InterPro" id="IPR020624">
    <property type="entry name" value="Schiff_base-form_aldolases_CS"/>
</dbReference>
<dbReference type="NCBIfam" id="TIGR00674">
    <property type="entry name" value="dapA"/>
    <property type="match status" value="1"/>
</dbReference>
<dbReference type="PANTHER" id="PTHR12128:SF66">
    <property type="entry name" value="4-HYDROXY-2-OXOGLUTARATE ALDOLASE, MITOCHONDRIAL"/>
    <property type="match status" value="1"/>
</dbReference>
<dbReference type="PANTHER" id="PTHR12128">
    <property type="entry name" value="DIHYDRODIPICOLINATE SYNTHASE"/>
    <property type="match status" value="1"/>
</dbReference>
<dbReference type="Pfam" id="PF00701">
    <property type="entry name" value="DHDPS"/>
    <property type="match status" value="1"/>
</dbReference>
<dbReference type="PIRSF" id="PIRSF001365">
    <property type="entry name" value="DHDPS"/>
    <property type="match status" value="1"/>
</dbReference>
<dbReference type="PRINTS" id="PR00146">
    <property type="entry name" value="DHPICSNTHASE"/>
</dbReference>
<dbReference type="SMART" id="SM01130">
    <property type="entry name" value="DHDPS"/>
    <property type="match status" value="1"/>
</dbReference>
<dbReference type="SUPFAM" id="SSF51569">
    <property type="entry name" value="Aldolase"/>
    <property type="match status" value="1"/>
</dbReference>
<dbReference type="PROSITE" id="PS00665">
    <property type="entry name" value="DHDPS_1"/>
    <property type="match status" value="1"/>
</dbReference>
<dbReference type="PROSITE" id="PS00666">
    <property type="entry name" value="DHDPS_2"/>
    <property type="match status" value="1"/>
</dbReference>
<protein>
    <recommendedName>
        <fullName evidence="1">4-hydroxy-tetrahydrodipicolinate synthase</fullName>
        <shortName evidence="1">HTPA synthase</shortName>
        <ecNumber evidence="1">4.3.3.7</ecNumber>
    </recommendedName>
</protein>
<gene>
    <name evidence="1" type="primary">dapA</name>
    <name type="ordered locus">Synpcc7942_1847</name>
</gene>
<evidence type="ECO:0000255" key="1">
    <source>
        <dbReference type="HAMAP-Rule" id="MF_00418"/>
    </source>
</evidence>
<evidence type="ECO:0000305" key="2"/>
<accession>Q31M42</accession>
<comment type="function">
    <text evidence="1">Catalyzes the condensation of (S)-aspartate-beta-semialdehyde [(S)-ASA] and pyruvate to 4-hydroxy-tetrahydrodipicolinate (HTPA).</text>
</comment>
<comment type="catalytic activity">
    <reaction evidence="1">
        <text>L-aspartate 4-semialdehyde + pyruvate = (2S,4S)-4-hydroxy-2,3,4,5-tetrahydrodipicolinate + H2O + H(+)</text>
        <dbReference type="Rhea" id="RHEA:34171"/>
        <dbReference type="ChEBI" id="CHEBI:15361"/>
        <dbReference type="ChEBI" id="CHEBI:15377"/>
        <dbReference type="ChEBI" id="CHEBI:15378"/>
        <dbReference type="ChEBI" id="CHEBI:67139"/>
        <dbReference type="ChEBI" id="CHEBI:537519"/>
        <dbReference type="EC" id="4.3.3.7"/>
    </reaction>
</comment>
<comment type="pathway">
    <text evidence="1">Amino-acid biosynthesis; L-lysine biosynthesis via DAP pathway; (S)-tetrahydrodipicolinate from L-aspartate: step 3/4.</text>
</comment>
<comment type="subunit">
    <text evidence="1">Homotetramer; dimer of dimers.</text>
</comment>
<comment type="subcellular location">
    <subcellularLocation>
        <location evidence="1">Cytoplasm</location>
    </subcellularLocation>
</comment>
<comment type="similarity">
    <text evidence="1">Belongs to the DapA family.</text>
</comment>
<comment type="caution">
    <text evidence="2">Was originally thought to be a dihydrodipicolinate synthase (DHDPS), catalyzing the condensation of (S)-aspartate-beta-semialdehyde [(S)-ASA] and pyruvate to dihydrodipicolinate (DHDP). However, it was shown in E.coli that the product of the enzymatic reaction is not dihydrodipicolinate but in fact (4S)-4-hydroxy-2,3,4,5-tetrahydro-(2S)-dipicolinic acid (HTPA), and that the consecutive dehydration reaction leading to DHDP is not spontaneous but catalyzed by DapB.</text>
</comment>
<proteinExistence type="inferred from homology"/>
<name>DAPA_SYNE7</name>
<keyword id="KW-0028">Amino-acid biosynthesis</keyword>
<keyword id="KW-0963">Cytoplasm</keyword>
<keyword id="KW-0220">Diaminopimelate biosynthesis</keyword>
<keyword id="KW-0456">Lyase</keyword>
<keyword id="KW-0457">Lysine biosynthesis</keyword>
<keyword id="KW-1185">Reference proteome</keyword>
<keyword id="KW-0704">Schiff base</keyword>
<reference key="1">
    <citation type="submission" date="2005-08" db="EMBL/GenBank/DDBJ databases">
        <title>Complete sequence of chromosome 1 of Synechococcus elongatus PCC 7942.</title>
        <authorList>
            <consortium name="US DOE Joint Genome Institute"/>
            <person name="Copeland A."/>
            <person name="Lucas S."/>
            <person name="Lapidus A."/>
            <person name="Barry K."/>
            <person name="Detter J.C."/>
            <person name="Glavina T."/>
            <person name="Hammon N."/>
            <person name="Israni S."/>
            <person name="Pitluck S."/>
            <person name="Schmutz J."/>
            <person name="Larimer F."/>
            <person name="Land M."/>
            <person name="Kyrpides N."/>
            <person name="Lykidis A."/>
            <person name="Golden S."/>
            <person name="Richardson P."/>
        </authorList>
    </citation>
    <scope>NUCLEOTIDE SEQUENCE [LARGE SCALE GENOMIC DNA]</scope>
    <source>
        <strain>ATCC 33912 / PCC 7942 / FACHB-805</strain>
    </source>
</reference>
<feature type="chain" id="PRO_1000050286" description="4-hydroxy-tetrahydrodipicolinate synthase">
    <location>
        <begin position="1"/>
        <end position="299"/>
    </location>
</feature>
<feature type="active site" description="Proton donor/acceptor" evidence="1">
    <location>
        <position position="139"/>
    </location>
</feature>
<feature type="active site" description="Schiff-base intermediate with substrate" evidence="1">
    <location>
        <position position="167"/>
    </location>
</feature>
<feature type="binding site" evidence="1">
    <location>
        <position position="50"/>
    </location>
    <ligand>
        <name>pyruvate</name>
        <dbReference type="ChEBI" id="CHEBI:15361"/>
    </ligand>
</feature>
<feature type="binding site" evidence="1">
    <location>
        <position position="209"/>
    </location>
    <ligand>
        <name>pyruvate</name>
        <dbReference type="ChEBI" id="CHEBI:15361"/>
    </ligand>
</feature>
<feature type="site" description="Part of a proton relay during catalysis" evidence="1">
    <location>
        <position position="49"/>
    </location>
</feature>
<feature type="site" description="Part of a proton relay during catalysis" evidence="1">
    <location>
        <position position="112"/>
    </location>
</feature>